<gene>
    <name type="primary">MT-CYB</name>
    <name type="synonym">COB</name>
    <name type="synonym">CYTB</name>
    <name type="synonym">MTCYB</name>
</gene>
<dbReference type="EMBL" id="AJ242683">
    <property type="protein sequence ID" value="CAC80343.1"/>
    <property type="molecule type" value="Genomic_DNA"/>
</dbReference>
<dbReference type="SMR" id="Q8M0A6"/>
<dbReference type="GO" id="GO:0005743">
    <property type="term" value="C:mitochondrial inner membrane"/>
    <property type="evidence" value="ECO:0007669"/>
    <property type="project" value="UniProtKB-SubCell"/>
</dbReference>
<dbReference type="GO" id="GO:0045275">
    <property type="term" value="C:respiratory chain complex III"/>
    <property type="evidence" value="ECO:0007669"/>
    <property type="project" value="InterPro"/>
</dbReference>
<dbReference type="GO" id="GO:0046872">
    <property type="term" value="F:metal ion binding"/>
    <property type="evidence" value="ECO:0007669"/>
    <property type="project" value="UniProtKB-KW"/>
</dbReference>
<dbReference type="GO" id="GO:0008121">
    <property type="term" value="F:ubiquinol-cytochrome-c reductase activity"/>
    <property type="evidence" value="ECO:0007669"/>
    <property type="project" value="InterPro"/>
</dbReference>
<dbReference type="GO" id="GO:0006122">
    <property type="term" value="P:mitochondrial electron transport, ubiquinol to cytochrome c"/>
    <property type="evidence" value="ECO:0007669"/>
    <property type="project" value="TreeGrafter"/>
</dbReference>
<dbReference type="CDD" id="cd00290">
    <property type="entry name" value="cytochrome_b_C"/>
    <property type="match status" value="1"/>
</dbReference>
<dbReference type="CDD" id="cd00284">
    <property type="entry name" value="Cytochrome_b_N"/>
    <property type="match status" value="1"/>
</dbReference>
<dbReference type="FunFam" id="1.20.810.10:FF:000002">
    <property type="entry name" value="Cytochrome b"/>
    <property type="match status" value="1"/>
</dbReference>
<dbReference type="Gene3D" id="1.20.810.10">
    <property type="entry name" value="Cytochrome Bc1 Complex, Chain C"/>
    <property type="match status" value="1"/>
</dbReference>
<dbReference type="InterPro" id="IPR005798">
    <property type="entry name" value="Cyt_b/b6_C"/>
</dbReference>
<dbReference type="InterPro" id="IPR036150">
    <property type="entry name" value="Cyt_b/b6_C_sf"/>
</dbReference>
<dbReference type="InterPro" id="IPR005797">
    <property type="entry name" value="Cyt_b/b6_N"/>
</dbReference>
<dbReference type="InterPro" id="IPR027387">
    <property type="entry name" value="Cytb/b6-like_sf"/>
</dbReference>
<dbReference type="InterPro" id="IPR030689">
    <property type="entry name" value="Cytochrome_b"/>
</dbReference>
<dbReference type="InterPro" id="IPR048260">
    <property type="entry name" value="Cytochrome_b_C_euk/bac"/>
</dbReference>
<dbReference type="InterPro" id="IPR048259">
    <property type="entry name" value="Cytochrome_b_N_euk/bac"/>
</dbReference>
<dbReference type="InterPro" id="IPR016174">
    <property type="entry name" value="Di-haem_cyt_TM"/>
</dbReference>
<dbReference type="PANTHER" id="PTHR19271">
    <property type="entry name" value="CYTOCHROME B"/>
    <property type="match status" value="1"/>
</dbReference>
<dbReference type="PANTHER" id="PTHR19271:SF16">
    <property type="entry name" value="CYTOCHROME B"/>
    <property type="match status" value="1"/>
</dbReference>
<dbReference type="Pfam" id="PF00032">
    <property type="entry name" value="Cytochrom_B_C"/>
    <property type="match status" value="1"/>
</dbReference>
<dbReference type="Pfam" id="PF00033">
    <property type="entry name" value="Cytochrome_B"/>
    <property type="match status" value="1"/>
</dbReference>
<dbReference type="PIRSF" id="PIRSF038885">
    <property type="entry name" value="COB"/>
    <property type="match status" value="1"/>
</dbReference>
<dbReference type="SUPFAM" id="SSF81648">
    <property type="entry name" value="a domain/subunit of cytochrome bc1 complex (Ubiquinol-cytochrome c reductase)"/>
    <property type="match status" value="1"/>
</dbReference>
<dbReference type="SUPFAM" id="SSF81342">
    <property type="entry name" value="Transmembrane di-heme cytochromes"/>
    <property type="match status" value="1"/>
</dbReference>
<dbReference type="PROSITE" id="PS51003">
    <property type="entry name" value="CYTB_CTER"/>
    <property type="match status" value="1"/>
</dbReference>
<dbReference type="PROSITE" id="PS51002">
    <property type="entry name" value="CYTB_NTER"/>
    <property type="match status" value="1"/>
</dbReference>
<accession>Q8M0A6</accession>
<proteinExistence type="inferred from homology"/>
<name>CYB_ALCTO</name>
<evidence type="ECO:0000250" key="1"/>
<evidence type="ECO:0000250" key="2">
    <source>
        <dbReference type="UniProtKB" id="P00157"/>
    </source>
</evidence>
<evidence type="ECO:0000255" key="3">
    <source>
        <dbReference type="PROSITE-ProRule" id="PRU00967"/>
    </source>
</evidence>
<evidence type="ECO:0000255" key="4">
    <source>
        <dbReference type="PROSITE-ProRule" id="PRU00968"/>
    </source>
</evidence>
<geneLocation type="mitochondrion"/>
<sequence>MAPNLRKSHPLLKLINNSLIDLPTPSNISAWWNFGSLLGICLLTQILTGLLLATHYTADTTLAFSSVAHTCRNVQYGWLIRNLHANGASFFFICIYLHIGRGFYYGSYLNKETWNTGVILLLALMATAFVGYVLPWGQMSFWGATVITNLFSAIPYIGQTLVEWAWGGFSVDNPTLTRFFALHFLLPFMIAGLALIHLTFLHESGSNNPLGILSNCDKIPFHPYFSLKDILGFIIMFLPLTTLALFSPNLLGDPENFTPANPLVTPPHIKPEWYFLFAYAILRSIPNKLGGVLALAASVLVLFLAPLLHKSKQRAMTFRPFSQFLFWTLAANLFILTWVGSQPVEHPFIIIGQLASLTYFTILLLLFPIAGALENKMLNY</sequence>
<organism>
    <name type="scientific">Alca torda</name>
    <name type="common">Razorbill</name>
    <dbReference type="NCBI Taxonomy" id="28689"/>
    <lineage>
        <taxon>Eukaryota</taxon>
        <taxon>Metazoa</taxon>
        <taxon>Chordata</taxon>
        <taxon>Craniata</taxon>
        <taxon>Vertebrata</taxon>
        <taxon>Euteleostomi</taxon>
        <taxon>Archelosauria</taxon>
        <taxon>Archosauria</taxon>
        <taxon>Dinosauria</taxon>
        <taxon>Saurischia</taxon>
        <taxon>Theropoda</taxon>
        <taxon>Coelurosauria</taxon>
        <taxon>Aves</taxon>
        <taxon>Neognathae</taxon>
        <taxon>Neoaves</taxon>
        <taxon>Charadriiformes</taxon>
        <taxon>Alcidae</taxon>
        <taxon>Alca</taxon>
    </lineage>
</organism>
<reference key="1">
    <citation type="journal article" date="2002" name="Mol. Biol. Evol.">
        <title>Mitochondrial DNA sequence evolution and phylogeny of the Atlantic Alcidae, including the extinct great auk (Pinguinus impennis).</title>
        <authorList>
            <person name="Moum T."/>
            <person name="Arnason U."/>
            <person name="Arnason E."/>
        </authorList>
    </citation>
    <scope>NUCLEOTIDE SEQUENCE [GENOMIC DNA]</scope>
</reference>
<comment type="function">
    <text evidence="2">Component of the ubiquinol-cytochrome c reductase complex (complex III or cytochrome b-c1 complex) that is part of the mitochondrial respiratory chain. The b-c1 complex mediates electron transfer from ubiquinol to cytochrome c. Contributes to the generation of a proton gradient across the mitochondrial membrane that is then used for ATP synthesis.</text>
</comment>
<comment type="cofactor">
    <cofactor evidence="2">
        <name>heme b</name>
        <dbReference type="ChEBI" id="CHEBI:60344"/>
    </cofactor>
    <text evidence="2">Binds 2 heme b groups non-covalently.</text>
</comment>
<comment type="subunit">
    <text evidence="2">The cytochrome bc1 complex contains 11 subunits: 3 respiratory subunits (MT-CYB, CYC1 and UQCRFS1), 2 core proteins (UQCRC1 and UQCRC2) and 6 low-molecular weight proteins (UQCRH/QCR6, UQCRB/QCR7, UQCRQ/QCR8, UQCR10/QCR9, UQCR11/QCR10 and a cleavage product of UQCRFS1). This cytochrome bc1 complex then forms a dimer.</text>
</comment>
<comment type="subcellular location">
    <subcellularLocation>
        <location evidence="2">Mitochondrion inner membrane</location>
        <topology evidence="2">Multi-pass membrane protein</topology>
    </subcellularLocation>
</comment>
<comment type="miscellaneous">
    <text evidence="1">Heme 1 (or BL or b562) is low-potential and absorbs at about 562 nm, and heme 2 (or BH or b566) is high-potential and absorbs at about 566 nm.</text>
</comment>
<comment type="similarity">
    <text evidence="3 4">Belongs to the cytochrome b family.</text>
</comment>
<comment type="caution">
    <text evidence="2">The full-length protein contains only eight transmembrane helices, not nine as predicted by bioinformatics tools.</text>
</comment>
<keyword id="KW-0249">Electron transport</keyword>
<keyword id="KW-0349">Heme</keyword>
<keyword id="KW-0408">Iron</keyword>
<keyword id="KW-0472">Membrane</keyword>
<keyword id="KW-0479">Metal-binding</keyword>
<keyword id="KW-0496">Mitochondrion</keyword>
<keyword id="KW-0999">Mitochondrion inner membrane</keyword>
<keyword id="KW-0679">Respiratory chain</keyword>
<keyword id="KW-0812">Transmembrane</keyword>
<keyword id="KW-1133">Transmembrane helix</keyword>
<keyword id="KW-0813">Transport</keyword>
<keyword id="KW-0830">Ubiquinone</keyword>
<protein>
    <recommendedName>
        <fullName>Cytochrome b</fullName>
    </recommendedName>
    <alternativeName>
        <fullName>Complex III subunit 3</fullName>
    </alternativeName>
    <alternativeName>
        <fullName>Complex III subunit III</fullName>
    </alternativeName>
    <alternativeName>
        <fullName>Cytochrome b-c1 complex subunit 3</fullName>
    </alternativeName>
    <alternativeName>
        <fullName>Ubiquinol-cytochrome-c reductase complex cytochrome b subunit</fullName>
    </alternativeName>
</protein>
<feature type="chain" id="PRO_0000060562" description="Cytochrome b">
    <location>
        <begin position="1"/>
        <end position="380"/>
    </location>
</feature>
<feature type="transmembrane region" description="Helical" evidence="2">
    <location>
        <begin position="34"/>
        <end position="54"/>
    </location>
</feature>
<feature type="transmembrane region" description="Helical" evidence="2">
    <location>
        <begin position="78"/>
        <end position="99"/>
    </location>
</feature>
<feature type="transmembrane region" description="Helical" evidence="2">
    <location>
        <begin position="114"/>
        <end position="134"/>
    </location>
</feature>
<feature type="transmembrane region" description="Helical" evidence="2">
    <location>
        <begin position="179"/>
        <end position="199"/>
    </location>
</feature>
<feature type="transmembrane region" description="Helical" evidence="2">
    <location>
        <begin position="227"/>
        <end position="247"/>
    </location>
</feature>
<feature type="transmembrane region" description="Helical" evidence="2">
    <location>
        <begin position="289"/>
        <end position="309"/>
    </location>
</feature>
<feature type="transmembrane region" description="Helical" evidence="2">
    <location>
        <begin position="321"/>
        <end position="341"/>
    </location>
</feature>
<feature type="transmembrane region" description="Helical" evidence="2">
    <location>
        <begin position="348"/>
        <end position="368"/>
    </location>
</feature>
<feature type="binding site" description="axial binding residue" evidence="2">
    <location>
        <position position="84"/>
    </location>
    <ligand>
        <name>heme b</name>
        <dbReference type="ChEBI" id="CHEBI:60344"/>
        <label>b562</label>
    </ligand>
    <ligandPart>
        <name>Fe</name>
        <dbReference type="ChEBI" id="CHEBI:18248"/>
    </ligandPart>
</feature>
<feature type="binding site" description="axial binding residue" evidence="2">
    <location>
        <position position="98"/>
    </location>
    <ligand>
        <name>heme b</name>
        <dbReference type="ChEBI" id="CHEBI:60344"/>
        <label>b566</label>
    </ligand>
    <ligandPart>
        <name>Fe</name>
        <dbReference type="ChEBI" id="CHEBI:18248"/>
    </ligandPart>
</feature>
<feature type="binding site" description="axial binding residue" evidence="2">
    <location>
        <position position="183"/>
    </location>
    <ligand>
        <name>heme b</name>
        <dbReference type="ChEBI" id="CHEBI:60344"/>
        <label>b562</label>
    </ligand>
    <ligandPart>
        <name>Fe</name>
        <dbReference type="ChEBI" id="CHEBI:18248"/>
    </ligandPart>
</feature>
<feature type="binding site" description="axial binding residue" evidence="2">
    <location>
        <position position="197"/>
    </location>
    <ligand>
        <name>heme b</name>
        <dbReference type="ChEBI" id="CHEBI:60344"/>
        <label>b566</label>
    </ligand>
    <ligandPart>
        <name>Fe</name>
        <dbReference type="ChEBI" id="CHEBI:18248"/>
    </ligandPart>
</feature>
<feature type="binding site" evidence="2">
    <location>
        <position position="202"/>
    </location>
    <ligand>
        <name>a ubiquinone</name>
        <dbReference type="ChEBI" id="CHEBI:16389"/>
    </ligand>
</feature>